<name>MURB_LEUMM</name>
<comment type="function">
    <text evidence="1">Cell wall formation.</text>
</comment>
<comment type="catalytic activity">
    <reaction evidence="1">
        <text>UDP-N-acetyl-alpha-D-muramate + NADP(+) = UDP-N-acetyl-3-O-(1-carboxyvinyl)-alpha-D-glucosamine + NADPH + H(+)</text>
        <dbReference type="Rhea" id="RHEA:12248"/>
        <dbReference type="ChEBI" id="CHEBI:15378"/>
        <dbReference type="ChEBI" id="CHEBI:57783"/>
        <dbReference type="ChEBI" id="CHEBI:58349"/>
        <dbReference type="ChEBI" id="CHEBI:68483"/>
        <dbReference type="ChEBI" id="CHEBI:70757"/>
        <dbReference type="EC" id="1.3.1.98"/>
    </reaction>
</comment>
<comment type="cofactor">
    <cofactor evidence="1">
        <name>FAD</name>
        <dbReference type="ChEBI" id="CHEBI:57692"/>
    </cofactor>
</comment>
<comment type="pathway">
    <text evidence="1">Cell wall biogenesis; peptidoglycan biosynthesis.</text>
</comment>
<comment type="subcellular location">
    <subcellularLocation>
        <location evidence="1">Cytoplasm</location>
    </subcellularLocation>
</comment>
<comment type="similarity">
    <text evidence="1">Belongs to the MurB family.</text>
</comment>
<proteinExistence type="inferred from homology"/>
<organism>
    <name type="scientific">Leuconostoc mesenteroides subsp. mesenteroides (strain ATCC 8293 / DSM 20343 / BCRC 11652 / CCM 1803 / JCM 6124 / NCDO 523 / NBRC 100496 / NCIMB 8023 / NCTC 12954 / NRRL B-1118 / 37Y)</name>
    <dbReference type="NCBI Taxonomy" id="203120"/>
    <lineage>
        <taxon>Bacteria</taxon>
        <taxon>Bacillati</taxon>
        <taxon>Bacillota</taxon>
        <taxon>Bacilli</taxon>
        <taxon>Lactobacillales</taxon>
        <taxon>Lactobacillaceae</taxon>
        <taxon>Leuconostoc</taxon>
    </lineage>
</organism>
<accession>Q03VW0</accession>
<keyword id="KW-0131">Cell cycle</keyword>
<keyword id="KW-0132">Cell division</keyword>
<keyword id="KW-0133">Cell shape</keyword>
<keyword id="KW-0961">Cell wall biogenesis/degradation</keyword>
<keyword id="KW-0963">Cytoplasm</keyword>
<keyword id="KW-0274">FAD</keyword>
<keyword id="KW-0285">Flavoprotein</keyword>
<keyword id="KW-0521">NADP</keyword>
<keyword id="KW-0560">Oxidoreductase</keyword>
<keyword id="KW-0573">Peptidoglycan synthesis</keyword>
<keyword id="KW-1185">Reference proteome</keyword>
<dbReference type="EC" id="1.3.1.98" evidence="1"/>
<dbReference type="EMBL" id="CP000414">
    <property type="protein sequence ID" value="ABJ62662.1"/>
    <property type="molecule type" value="Genomic_DNA"/>
</dbReference>
<dbReference type="RefSeq" id="WP_011680231.1">
    <property type="nucleotide sequence ID" value="NC_008531.1"/>
</dbReference>
<dbReference type="SMR" id="Q03VW0"/>
<dbReference type="EnsemblBacteria" id="ABJ62662">
    <property type="protein sequence ID" value="ABJ62662"/>
    <property type="gene ID" value="LEUM_1570"/>
</dbReference>
<dbReference type="GeneID" id="29576959"/>
<dbReference type="KEGG" id="lme:LEUM_1570"/>
<dbReference type="eggNOG" id="COG0812">
    <property type="taxonomic scope" value="Bacteria"/>
</dbReference>
<dbReference type="HOGENOM" id="CLU_035304_1_1_9"/>
<dbReference type="UniPathway" id="UPA00219"/>
<dbReference type="Proteomes" id="UP000000362">
    <property type="component" value="Chromosome"/>
</dbReference>
<dbReference type="GO" id="GO:0005829">
    <property type="term" value="C:cytosol"/>
    <property type="evidence" value="ECO:0007669"/>
    <property type="project" value="TreeGrafter"/>
</dbReference>
<dbReference type="GO" id="GO:0071949">
    <property type="term" value="F:FAD binding"/>
    <property type="evidence" value="ECO:0007669"/>
    <property type="project" value="InterPro"/>
</dbReference>
<dbReference type="GO" id="GO:0008762">
    <property type="term" value="F:UDP-N-acetylmuramate dehydrogenase activity"/>
    <property type="evidence" value="ECO:0007669"/>
    <property type="project" value="UniProtKB-UniRule"/>
</dbReference>
<dbReference type="GO" id="GO:0051301">
    <property type="term" value="P:cell division"/>
    <property type="evidence" value="ECO:0007669"/>
    <property type="project" value="UniProtKB-KW"/>
</dbReference>
<dbReference type="GO" id="GO:0071555">
    <property type="term" value="P:cell wall organization"/>
    <property type="evidence" value="ECO:0007669"/>
    <property type="project" value="UniProtKB-KW"/>
</dbReference>
<dbReference type="GO" id="GO:0009252">
    <property type="term" value="P:peptidoglycan biosynthetic process"/>
    <property type="evidence" value="ECO:0007669"/>
    <property type="project" value="UniProtKB-UniRule"/>
</dbReference>
<dbReference type="GO" id="GO:0008360">
    <property type="term" value="P:regulation of cell shape"/>
    <property type="evidence" value="ECO:0007669"/>
    <property type="project" value="UniProtKB-KW"/>
</dbReference>
<dbReference type="Gene3D" id="3.30.465.10">
    <property type="match status" value="1"/>
</dbReference>
<dbReference type="Gene3D" id="3.90.78.10">
    <property type="entry name" value="UDP-N-acetylenolpyruvoylglucosamine reductase, C-terminal domain"/>
    <property type="match status" value="1"/>
</dbReference>
<dbReference type="Gene3D" id="3.30.43.10">
    <property type="entry name" value="Uridine Diphospho-n-acetylenolpyruvylglucosamine Reductase, domain 2"/>
    <property type="match status" value="1"/>
</dbReference>
<dbReference type="HAMAP" id="MF_00037">
    <property type="entry name" value="MurB"/>
    <property type="match status" value="1"/>
</dbReference>
<dbReference type="InterPro" id="IPR016166">
    <property type="entry name" value="FAD-bd_PCMH"/>
</dbReference>
<dbReference type="InterPro" id="IPR036318">
    <property type="entry name" value="FAD-bd_PCMH-like_sf"/>
</dbReference>
<dbReference type="InterPro" id="IPR016167">
    <property type="entry name" value="FAD-bd_PCMH_sub1"/>
</dbReference>
<dbReference type="InterPro" id="IPR016169">
    <property type="entry name" value="FAD-bd_PCMH_sub2"/>
</dbReference>
<dbReference type="InterPro" id="IPR003170">
    <property type="entry name" value="MurB"/>
</dbReference>
<dbReference type="InterPro" id="IPR011601">
    <property type="entry name" value="MurB_C"/>
</dbReference>
<dbReference type="InterPro" id="IPR036635">
    <property type="entry name" value="MurB_C_sf"/>
</dbReference>
<dbReference type="InterPro" id="IPR006094">
    <property type="entry name" value="Oxid_FAD_bind_N"/>
</dbReference>
<dbReference type="NCBIfam" id="TIGR00179">
    <property type="entry name" value="murB"/>
    <property type="match status" value="1"/>
</dbReference>
<dbReference type="NCBIfam" id="NF010480">
    <property type="entry name" value="PRK13905.1"/>
    <property type="match status" value="1"/>
</dbReference>
<dbReference type="PANTHER" id="PTHR21071">
    <property type="entry name" value="UDP-N-ACETYLENOLPYRUVOYLGLUCOSAMINE REDUCTASE"/>
    <property type="match status" value="1"/>
</dbReference>
<dbReference type="PANTHER" id="PTHR21071:SF4">
    <property type="entry name" value="UDP-N-ACETYLENOLPYRUVOYLGLUCOSAMINE REDUCTASE"/>
    <property type="match status" value="1"/>
</dbReference>
<dbReference type="Pfam" id="PF01565">
    <property type="entry name" value="FAD_binding_4"/>
    <property type="match status" value="1"/>
</dbReference>
<dbReference type="Pfam" id="PF02873">
    <property type="entry name" value="MurB_C"/>
    <property type="match status" value="1"/>
</dbReference>
<dbReference type="SUPFAM" id="SSF56176">
    <property type="entry name" value="FAD-binding/transporter-associated domain-like"/>
    <property type="match status" value="1"/>
</dbReference>
<dbReference type="SUPFAM" id="SSF56194">
    <property type="entry name" value="Uridine diphospho-N-Acetylenolpyruvylglucosamine reductase, MurB, C-terminal domain"/>
    <property type="match status" value="1"/>
</dbReference>
<dbReference type="PROSITE" id="PS51387">
    <property type="entry name" value="FAD_PCMH"/>
    <property type="match status" value="1"/>
</dbReference>
<sequence length="292" mass="32031">MQLENIEILENHSLAPYAYTQAGGLVDYLAIPKSIHELKVLVNWAKELGMPVQVFGRLSNLIVRNGGLRGLSILLHDLRDVVVDQNKIVASAGADLIWVTEQAFEHGLSGLEWGAGIPGSVGGAVFMNAGAYGGQVDMVVSSVTALMPDGTLQNFEKKALEFGYRKSVFQSNGGIIISATFELQPDSCTAIRTRMDENNFKRANKQPLNYPSNGSVFKRPEGYFAGKLIMDSKLQGVRRGGVEVSKKHAGFMVNIAHGTGNDYEDLIHYVQKTVYEKFGVHLETEVRIMGER</sequence>
<gene>
    <name evidence="1" type="primary">murB</name>
    <name type="ordered locus">LEUM_1570</name>
</gene>
<protein>
    <recommendedName>
        <fullName evidence="1">UDP-N-acetylenolpyruvoylglucosamine reductase</fullName>
        <ecNumber evidence="1">1.3.1.98</ecNumber>
    </recommendedName>
    <alternativeName>
        <fullName evidence="1">UDP-N-acetylmuramate dehydrogenase</fullName>
    </alternativeName>
</protein>
<reference key="1">
    <citation type="journal article" date="2006" name="Proc. Natl. Acad. Sci. U.S.A.">
        <title>Comparative genomics of the lactic acid bacteria.</title>
        <authorList>
            <person name="Makarova K.S."/>
            <person name="Slesarev A."/>
            <person name="Wolf Y.I."/>
            <person name="Sorokin A."/>
            <person name="Mirkin B."/>
            <person name="Koonin E.V."/>
            <person name="Pavlov A."/>
            <person name="Pavlova N."/>
            <person name="Karamychev V."/>
            <person name="Polouchine N."/>
            <person name="Shakhova V."/>
            <person name="Grigoriev I."/>
            <person name="Lou Y."/>
            <person name="Rohksar D."/>
            <person name="Lucas S."/>
            <person name="Huang K."/>
            <person name="Goodstein D.M."/>
            <person name="Hawkins T."/>
            <person name="Plengvidhya V."/>
            <person name="Welker D."/>
            <person name="Hughes J."/>
            <person name="Goh Y."/>
            <person name="Benson A."/>
            <person name="Baldwin K."/>
            <person name="Lee J.-H."/>
            <person name="Diaz-Muniz I."/>
            <person name="Dosti B."/>
            <person name="Smeianov V."/>
            <person name="Wechter W."/>
            <person name="Barabote R."/>
            <person name="Lorca G."/>
            <person name="Altermann E."/>
            <person name="Barrangou R."/>
            <person name="Ganesan B."/>
            <person name="Xie Y."/>
            <person name="Rawsthorne H."/>
            <person name="Tamir D."/>
            <person name="Parker C."/>
            <person name="Breidt F."/>
            <person name="Broadbent J.R."/>
            <person name="Hutkins R."/>
            <person name="O'Sullivan D."/>
            <person name="Steele J."/>
            <person name="Unlu G."/>
            <person name="Saier M.H. Jr."/>
            <person name="Klaenhammer T."/>
            <person name="Richardson P."/>
            <person name="Kozyavkin S."/>
            <person name="Weimer B.C."/>
            <person name="Mills D.A."/>
        </authorList>
    </citation>
    <scope>NUCLEOTIDE SEQUENCE [LARGE SCALE GENOMIC DNA]</scope>
    <source>
        <strain>ATCC 8293 / DSM 20343 / BCRC 11652 / CCM 1803 / JCM 6124 / NCDO 523 / NBRC 100496 / NCIMB 8023 / NCTC 12954 / NRRL B-1118 / 37Y</strain>
    </source>
</reference>
<evidence type="ECO:0000255" key="1">
    <source>
        <dbReference type="HAMAP-Rule" id="MF_00037"/>
    </source>
</evidence>
<feature type="chain" id="PRO_0000332468" description="UDP-N-acetylenolpyruvoylglucosamine reductase">
    <location>
        <begin position="1"/>
        <end position="292"/>
    </location>
</feature>
<feature type="domain" description="FAD-binding PCMH-type" evidence="1">
    <location>
        <begin position="21"/>
        <end position="186"/>
    </location>
</feature>
<feature type="active site" evidence="1">
    <location>
        <position position="165"/>
    </location>
</feature>
<feature type="active site" description="Proton donor" evidence="1">
    <location>
        <position position="215"/>
    </location>
</feature>
<feature type="active site" evidence="1">
    <location>
        <position position="285"/>
    </location>
</feature>